<sequence length="81" mass="8010">MDPTIAAGALIGGGLIMAGGAIGAGIGDGIAGNALIAGIARQPEAQGRLFTPFFITVGLVEAAYFINLAFMALFVFATPVA</sequence>
<organism>
    <name type="scientific">Mycobacterium sp. (strain MCS)</name>
    <dbReference type="NCBI Taxonomy" id="164756"/>
    <lineage>
        <taxon>Bacteria</taxon>
        <taxon>Bacillati</taxon>
        <taxon>Actinomycetota</taxon>
        <taxon>Actinomycetes</taxon>
        <taxon>Mycobacteriales</taxon>
        <taxon>Mycobacteriaceae</taxon>
        <taxon>Mycobacterium</taxon>
    </lineage>
</organism>
<name>ATPL_MYCSS</name>
<dbReference type="EMBL" id="CP000384">
    <property type="protein sequence ID" value="ABG09986.1"/>
    <property type="molecule type" value="Genomic_DNA"/>
</dbReference>
<dbReference type="SMR" id="Q1B548"/>
<dbReference type="KEGG" id="mmc:Mmcs_3881"/>
<dbReference type="HOGENOM" id="CLU_148047_1_2_11"/>
<dbReference type="BioCyc" id="MSP164756:G1G6O-3965-MONOMER"/>
<dbReference type="GO" id="GO:0005886">
    <property type="term" value="C:plasma membrane"/>
    <property type="evidence" value="ECO:0007669"/>
    <property type="project" value="UniProtKB-SubCell"/>
</dbReference>
<dbReference type="GO" id="GO:0045259">
    <property type="term" value="C:proton-transporting ATP synthase complex"/>
    <property type="evidence" value="ECO:0007669"/>
    <property type="project" value="UniProtKB-KW"/>
</dbReference>
<dbReference type="GO" id="GO:0033177">
    <property type="term" value="C:proton-transporting two-sector ATPase complex, proton-transporting domain"/>
    <property type="evidence" value="ECO:0007669"/>
    <property type="project" value="InterPro"/>
</dbReference>
<dbReference type="GO" id="GO:0008289">
    <property type="term" value="F:lipid binding"/>
    <property type="evidence" value="ECO:0007669"/>
    <property type="project" value="UniProtKB-KW"/>
</dbReference>
<dbReference type="GO" id="GO:0046933">
    <property type="term" value="F:proton-transporting ATP synthase activity, rotational mechanism"/>
    <property type="evidence" value="ECO:0007669"/>
    <property type="project" value="UniProtKB-UniRule"/>
</dbReference>
<dbReference type="Gene3D" id="1.20.20.10">
    <property type="entry name" value="F1F0 ATP synthase subunit C"/>
    <property type="match status" value="1"/>
</dbReference>
<dbReference type="HAMAP" id="MF_01396">
    <property type="entry name" value="ATP_synth_c_bact"/>
    <property type="match status" value="1"/>
</dbReference>
<dbReference type="InterPro" id="IPR005953">
    <property type="entry name" value="ATP_synth_csu_bac/chlpt"/>
</dbReference>
<dbReference type="InterPro" id="IPR000454">
    <property type="entry name" value="ATP_synth_F0_csu"/>
</dbReference>
<dbReference type="InterPro" id="IPR020537">
    <property type="entry name" value="ATP_synth_F0_csu_DDCD_BS"/>
</dbReference>
<dbReference type="InterPro" id="IPR038662">
    <property type="entry name" value="ATP_synth_F0_csu_sf"/>
</dbReference>
<dbReference type="InterPro" id="IPR002379">
    <property type="entry name" value="ATPase_proteolipid_c-like_dom"/>
</dbReference>
<dbReference type="InterPro" id="IPR035921">
    <property type="entry name" value="F/V-ATP_Csub_sf"/>
</dbReference>
<dbReference type="NCBIfam" id="TIGR01260">
    <property type="entry name" value="ATP_synt_c"/>
    <property type="match status" value="1"/>
</dbReference>
<dbReference type="NCBIfam" id="NF004532">
    <property type="entry name" value="PRK05880.1"/>
    <property type="match status" value="1"/>
</dbReference>
<dbReference type="Pfam" id="PF00137">
    <property type="entry name" value="ATP-synt_C"/>
    <property type="match status" value="1"/>
</dbReference>
<dbReference type="PRINTS" id="PR00124">
    <property type="entry name" value="ATPASEC"/>
</dbReference>
<dbReference type="SUPFAM" id="SSF81333">
    <property type="entry name" value="F1F0 ATP synthase subunit C"/>
    <property type="match status" value="1"/>
</dbReference>
<dbReference type="PROSITE" id="PS00605">
    <property type="entry name" value="ATPASE_C"/>
    <property type="match status" value="1"/>
</dbReference>
<gene>
    <name evidence="1" type="primary">atpE</name>
    <name type="ordered locus">Mmcs_3881</name>
</gene>
<protein>
    <recommendedName>
        <fullName evidence="1">ATP synthase subunit c</fullName>
    </recommendedName>
    <alternativeName>
        <fullName evidence="1">ATP synthase F(0) sector subunit c</fullName>
    </alternativeName>
    <alternativeName>
        <fullName evidence="1">F-type ATPase subunit c</fullName>
        <shortName evidence="1">F-ATPase subunit c</shortName>
    </alternativeName>
    <alternativeName>
        <fullName evidence="1">Lipid-binding protein</fullName>
    </alternativeName>
</protein>
<comment type="function">
    <text evidence="1">F(1)F(0) ATP synthase produces ATP from ADP in the presence of a proton or sodium gradient. F-type ATPases consist of two structural domains, F(1) containing the extramembraneous catalytic core and F(0) containing the membrane proton channel, linked together by a central stalk and a peripheral stalk. During catalysis, ATP synthesis in the catalytic domain of F(1) is coupled via a rotary mechanism of the central stalk subunits to proton translocation.</text>
</comment>
<comment type="function">
    <text evidence="1">Key component of the F(0) channel; it plays a direct role in translocation across the membrane. A homomeric c-ring of between 10-14 subunits forms the central stalk rotor element with the F(1) delta and epsilon subunits.</text>
</comment>
<comment type="subunit">
    <text evidence="1">F-type ATPases have 2 components, F(1) - the catalytic core - and F(0) - the membrane proton channel. F(1) has five subunits: alpha(3), beta(3), gamma(1), delta(1), epsilon(1). F(0) has three main subunits: a(1), b(2) and c(10-14). The alpha and beta chains form an alternating ring which encloses part of the gamma chain. F(1) is attached to F(0) by a central stalk formed by the gamma and epsilon chains, while a peripheral stalk is formed by the delta and b chains.</text>
</comment>
<comment type="subcellular location">
    <subcellularLocation>
        <location evidence="1">Cell membrane</location>
        <topology evidence="1">Multi-pass membrane protein</topology>
    </subcellularLocation>
</comment>
<comment type="similarity">
    <text evidence="1">Belongs to the ATPase C chain family.</text>
</comment>
<keyword id="KW-0066">ATP synthesis</keyword>
<keyword id="KW-1003">Cell membrane</keyword>
<keyword id="KW-0138">CF(0)</keyword>
<keyword id="KW-0375">Hydrogen ion transport</keyword>
<keyword id="KW-0406">Ion transport</keyword>
<keyword id="KW-0446">Lipid-binding</keyword>
<keyword id="KW-0472">Membrane</keyword>
<keyword id="KW-0812">Transmembrane</keyword>
<keyword id="KW-1133">Transmembrane helix</keyword>
<keyword id="KW-0813">Transport</keyword>
<evidence type="ECO:0000255" key="1">
    <source>
        <dbReference type="HAMAP-Rule" id="MF_01396"/>
    </source>
</evidence>
<proteinExistence type="inferred from homology"/>
<feature type="chain" id="PRO_1000184420" description="ATP synthase subunit c">
    <location>
        <begin position="1"/>
        <end position="81"/>
    </location>
</feature>
<feature type="transmembrane region" description="Helical" evidence="1">
    <location>
        <begin position="5"/>
        <end position="25"/>
    </location>
</feature>
<feature type="transmembrane region" description="Helical" evidence="1">
    <location>
        <begin position="57"/>
        <end position="77"/>
    </location>
</feature>
<feature type="site" description="Reversibly protonated during proton transport" evidence="1">
    <location>
        <position position="61"/>
    </location>
</feature>
<accession>Q1B548</accession>
<reference key="1">
    <citation type="submission" date="2006-06" db="EMBL/GenBank/DDBJ databases">
        <title>Complete sequence of chromosome of Mycobacterium sp. MCS.</title>
        <authorList>
            <consortium name="US DOE Joint Genome Institute"/>
            <person name="Copeland A."/>
            <person name="Lucas S."/>
            <person name="Lapidus A."/>
            <person name="Barry K."/>
            <person name="Detter J.C."/>
            <person name="Glavina del Rio T."/>
            <person name="Hammon N."/>
            <person name="Israni S."/>
            <person name="Dalin E."/>
            <person name="Tice H."/>
            <person name="Pitluck S."/>
            <person name="Martinez M."/>
            <person name="Schmutz J."/>
            <person name="Larimer F."/>
            <person name="Land M."/>
            <person name="Hauser L."/>
            <person name="Kyrpides N."/>
            <person name="Kim E."/>
            <person name="Miller C.D."/>
            <person name="Hughes J.E."/>
            <person name="Anderson A.J."/>
            <person name="Sims R.C."/>
            <person name="Richardson P."/>
        </authorList>
    </citation>
    <scope>NUCLEOTIDE SEQUENCE [LARGE SCALE GENOMIC DNA]</scope>
    <source>
        <strain>MCS</strain>
    </source>
</reference>